<sequence length="146" mass="16216">VHWTAEEKQLITGLWGKVNVADCGAEALARLLIVYPWTQRFFASFGNLSSPTAILGNPMVRAHGKKVLTSFGEAVKNLDNIKNTFAQLSELHCDKLHVDPENFRLLGDILIIVLAAHFGKDFTPECQAALQKLVRVVAHALARKYH</sequence>
<name>HBB_ARAAR</name>
<comment type="function">
    <text>Involved in oxygen transport from the lung to the various peripheral tissues.</text>
</comment>
<comment type="subunit">
    <text>Heterotetramer of two alpha chains and two beta chains.</text>
</comment>
<comment type="tissue specificity">
    <text>Red blood cells.</text>
</comment>
<comment type="similarity">
    <text evidence="1">Belongs to the globin family.</text>
</comment>
<reference key="1">
    <citation type="journal article" date="1985" name="Biol. Chem. Hoppe-Seyler">
        <title>The primary structure of alpha A- and beta-chains from blue- and-yellow macaw (Ara ararauna, Psittaci) hemoglobin. No evidence for expression of alpha D-chains.</title>
        <authorList>
            <person name="Godovac-Zimmermann J."/>
            <person name="Braunitzer G."/>
        </authorList>
    </citation>
    <scope>PROTEIN SEQUENCE</scope>
</reference>
<keyword id="KW-0903">Direct protein sequencing</keyword>
<keyword id="KW-0349">Heme</keyword>
<keyword id="KW-0408">Iron</keyword>
<keyword id="KW-0479">Metal-binding</keyword>
<keyword id="KW-0561">Oxygen transport</keyword>
<keyword id="KW-0813">Transport</keyword>
<gene>
    <name type="primary">HBB</name>
</gene>
<evidence type="ECO:0000255" key="1">
    <source>
        <dbReference type="PROSITE-ProRule" id="PRU00238"/>
    </source>
</evidence>
<accession>P02116</accession>
<feature type="chain" id="PRO_0000052881" description="Hemoglobin subunit beta">
    <location>
        <begin position="1"/>
        <end position="146"/>
    </location>
</feature>
<feature type="domain" description="Globin" evidence="1">
    <location>
        <begin position="2"/>
        <end position="146"/>
    </location>
</feature>
<feature type="binding site" description="distal binding residue">
    <location>
        <position position="63"/>
    </location>
    <ligand>
        <name>heme b</name>
        <dbReference type="ChEBI" id="CHEBI:60344"/>
    </ligand>
    <ligandPart>
        <name>Fe</name>
        <dbReference type="ChEBI" id="CHEBI:18248"/>
    </ligandPart>
</feature>
<feature type="binding site" description="proximal binding residue">
    <location>
        <position position="92"/>
    </location>
    <ligand>
        <name>heme b</name>
        <dbReference type="ChEBI" id="CHEBI:60344"/>
    </ligand>
    <ligandPart>
        <name>Fe</name>
        <dbReference type="ChEBI" id="CHEBI:18248"/>
    </ligandPart>
</feature>
<protein>
    <recommendedName>
        <fullName>Hemoglobin subunit beta</fullName>
    </recommendedName>
    <alternativeName>
        <fullName>Beta-globin</fullName>
    </alternativeName>
    <alternativeName>
        <fullName>Hemoglobin beta chain</fullName>
    </alternativeName>
</protein>
<dbReference type="PIR" id="A02436">
    <property type="entry name" value="HBDL"/>
</dbReference>
<dbReference type="SMR" id="P02116"/>
<dbReference type="GO" id="GO:0072562">
    <property type="term" value="C:blood microparticle"/>
    <property type="evidence" value="ECO:0007669"/>
    <property type="project" value="TreeGrafter"/>
</dbReference>
<dbReference type="GO" id="GO:0031838">
    <property type="term" value="C:haptoglobin-hemoglobin complex"/>
    <property type="evidence" value="ECO:0007669"/>
    <property type="project" value="TreeGrafter"/>
</dbReference>
<dbReference type="GO" id="GO:0005833">
    <property type="term" value="C:hemoglobin complex"/>
    <property type="evidence" value="ECO:0007669"/>
    <property type="project" value="InterPro"/>
</dbReference>
<dbReference type="GO" id="GO:0031720">
    <property type="term" value="F:haptoglobin binding"/>
    <property type="evidence" value="ECO:0007669"/>
    <property type="project" value="TreeGrafter"/>
</dbReference>
<dbReference type="GO" id="GO:0020037">
    <property type="term" value="F:heme binding"/>
    <property type="evidence" value="ECO:0007669"/>
    <property type="project" value="InterPro"/>
</dbReference>
<dbReference type="GO" id="GO:0046872">
    <property type="term" value="F:metal ion binding"/>
    <property type="evidence" value="ECO:0007669"/>
    <property type="project" value="UniProtKB-KW"/>
</dbReference>
<dbReference type="GO" id="GO:0043177">
    <property type="term" value="F:organic acid binding"/>
    <property type="evidence" value="ECO:0007669"/>
    <property type="project" value="TreeGrafter"/>
</dbReference>
<dbReference type="GO" id="GO:0019825">
    <property type="term" value="F:oxygen binding"/>
    <property type="evidence" value="ECO:0007669"/>
    <property type="project" value="InterPro"/>
</dbReference>
<dbReference type="GO" id="GO:0005344">
    <property type="term" value="F:oxygen carrier activity"/>
    <property type="evidence" value="ECO:0007669"/>
    <property type="project" value="UniProtKB-KW"/>
</dbReference>
<dbReference type="GO" id="GO:0004601">
    <property type="term" value="F:peroxidase activity"/>
    <property type="evidence" value="ECO:0007669"/>
    <property type="project" value="TreeGrafter"/>
</dbReference>
<dbReference type="GO" id="GO:0042744">
    <property type="term" value="P:hydrogen peroxide catabolic process"/>
    <property type="evidence" value="ECO:0007669"/>
    <property type="project" value="TreeGrafter"/>
</dbReference>
<dbReference type="CDD" id="cd08925">
    <property type="entry name" value="Hb-beta-like"/>
    <property type="match status" value="1"/>
</dbReference>
<dbReference type="FunFam" id="1.10.490.10:FF:000001">
    <property type="entry name" value="Hemoglobin subunit beta"/>
    <property type="match status" value="1"/>
</dbReference>
<dbReference type="Gene3D" id="1.10.490.10">
    <property type="entry name" value="Globins"/>
    <property type="match status" value="1"/>
</dbReference>
<dbReference type="InterPro" id="IPR000971">
    <property type="entry name" value="Globin"/>
</dbReference>
<dbReference type="InterPro" id="IPR009050">
    <property type="entry name" value="Globin-like_sf"/>
</dbReference>
<dbReference type="InterPro" id="IPR012292">
    <property type="entry name" value="Globin/Proto"/>
</dbReference>
<dbReference type="InterPro" id="IPR002337">
    <property type="entry name" value="Hemoglobin_b"/>
</dbReference>
<dbReference type="InterPro" id="IPR050056">
    <property type="entry name" value="Hemoglobin_oxygen_transport"/>
</dbReference>
<dbReference type="PANTHER" id="PTHR11442">
    <property type="entry name" value="HEMOGLOBIN FAMILY MEMBER"/>
    <property type="match status" value="1"/>
</dbReference>
<dbReference type="PANTHER" id="PTHR11442:SF7">
    <property type="entry name" value="HEMOGLOBIN SUBUNIT EPSILON"/>
    <property type="match status" value="1"/>
</dbReference>
<dbReference type="Pfam" id="PF00042">
    <property type="entry name" value="Globin"/>
    <property type="match status" value="1"/>
</dbReference>
<dbReference type="PRINTS" id="PR00814">
    <property type="entry name" value="BETAHAEM"/>
</dbReference>
<dbReference type="SUPFAM" id="SSF46458">
    <property type="entry name" value="Globin-like"/>
    <property type="match status" value="1"/>
</dbReference>
<dbReference type="PROSITE" id="PS01033">
    <property type="entry name" value="GLOBIN"/>
    <property type="match status" value="1"/>
</dbReference>
<organism>
    <name type="scientific">Ara ararauna</name>
    <name type="common">Blue-and-yellow macaw</name>
    <dbReference type="NCBI Taxonomy" id="9226"/>
    <lineage>
        <taxon>Eukaryota</taxon>
        <taxon>Metazoa</taxon>
        <taxon>Chordata</taxon>
        <taxon>Craniata</taxon>
        <taxon>Vertebrata</taxon>
        <taxon>Euteleostomi</taxon>
        <taxon>Archelosauria</taxon>
        <taxon>Archosauria</taxon>
        <taxon>Dinosauria</taxon>
        <taxon>Saurischia</taxon>
        <taxon>Theropoda</taxon>
        <taxon>Coelurosauria</taxon>
        <taxon>Aves</taxon>
        <taxon>Neognathae</taxon>
        <taxon>Neoaves</taxon>
        <taxon>Telluraves</taxon>
        <taxon>Australaves</taxon>
        <taxon>Psittaciformes</taxon>
        <taxon>Psittacidae</taxon>
        <taxon>Ara</taxon>
    </lineage>
</organism>
<proteinExistence type="evidence at protein level"/>